<organism>
    <name type="scientific">Arabidopsis thaliana</name>
    <name type="common">Mouse-ear cress</name>
    <dbReference type="NCBI Taxonomy" id="3702"/>
    <lineage>
        <taxon>Eukaryota</taxon>
        <taxon>Viridiplantae</taxon>
        <taxon>Streptophyta</taxon>
        <taxon>Embryophyta</taxon>
        <taxon>Tracheophyta</taxon>
        <taxon>Spermatophyta</taxon>
        <taxon>Magnoliopsida</taxon>
        <taxon>eudicotyledons</taxon>
        <taxon>Gunneridae</taxon>
        <taxon>Pentapetalae</taxon>
        <taxon>rosids</taxon>
        <taxon>malvids</taxon>
        <taxon>Brassicales</taxon>
        <taxon>Brassicaceae</taxon>
        <taxon>Camelineae</taxon>
        <taxon>Arabidopsis</taxon>
    </lineage>
</organism>
<gene>
    <name type="primary">EMB2752</name>
    <name type="ordered locus">At4g29660</name>
    <name type="ORF">T16L4.170</name>
</gene>
<proteinExistence type="predicted"/>
<dbReference type="EMBL" id="AL079344">
    <property type="protein sequence ID" value="CAB45326.1"/>
    <property type="status" value="ALT_SEQ"/>
    <property type="molecule type" value="Genomic_DNA"/>
</dbReference>
<dbReference type="EMBL" id="AL161575">
    <property type="protein sequence ID" value="CAB79724.1"/>
    <property type="status" value="ALT_SEQ"/>
    <property type="molecule type" value="Genomic_DNA"/>
</dbReference>
<dbReference type="EMBL" id="CP002687">
    <property type="protein sequence ID" value="AEE85658.1"/>
    <property type="molecule type" value="Genomic_DNA"/>
</dbReference>
<dbReference type="EMBL" id="AF370473">
    <property type="protein sequence ID" value="AAK43850.1"/>
    <property type="molecule type" value="mRNA"/>
</dbReference>
<dbReference type="EMBL" id="AY064667">
    <property type="protein sequence ID" value="AAL47374.1"/>
    <property type="molecule type" value="mRNA"/>
</dbReference>
<dbReference type="EMBL" id="AY085163">
    <property type="protein sequence ID" value="AAM61716.1"/>
    <property type="molecule type" value="mRNA"/>
</dbReference>
<dbReference type="RefSeq" id="NP_567830.1">
    <property type="nucleotide sequence ID" value="NM_119111.4"/>
</dbReference>
<dbReference type="SMR" id="Q94K18"/>
<dbReference type="BioGRID" id="14374">
    <property type="interactions" value="1"/>
</dbReference>
<dbReference type="FunCoup" id="Q94K18">
    <property type="interactions" value="801"/>
</dbReference>
<dbReference type="IntAct" id="Q94K18">
    <property type="interactions" value="1"/>
</dbReference>
<dbReference type="STRING" id="3702.Q94K18"/>
<dbReference type="PaxDb" id="3702-AT4G29660.1"/>
<dbReference type="ProteomicsDB" id="242891"/>
<dbReference type="EnsemblPlants" id="AT4G29660.1">
    <property type="protein sequence ID" value="AT4G29660.1"/>
    <property type="gene ID" value="AT4G29660"/>
</dbReference>
<dbReference type="GeneID" id="829087"/>
<dbReference type="Gramene" id="AT4G29660.1">
    <property type="protein sequence ID" value="AT4G29660.1"/>
    <property type="gene ID" value="AT4G29660"/>
</dbReference>
<dbReference type="KEGG" id="ath:AT4G29660"/>
<dbReference type="Araport" id="AT4G29660"/>
<dbReference type="TAIR" id="AT4G29660">
    <property type="gene designation" value="EMB2752"/>
</dbReference>
<dbReference type="eggNOG" id="KOG3142">
    <property type="taxonomic scope" value="Eukaryota"/>
</dbReference>
<dbReference type="HOGENOM" id="CLU_155515_0_0_1"/>
<dbReference type="InParanoid" id="Q94K18"/>
<dbReference type="OMA" id="TLLWDMV"/>
<dbReference type="OrthoDB" id="2016662at2759"/>
<dbReference type="PhylomeDB" id="Q94K18"/>
<dbReference type="PRO" id="PR:Q94K18"/>
<dbReference type="Proteomes" id="UP000006548">
    <property type="component" value="Chromosome 4"/>
</dbReference>
<dbReference type="ExpressionAtlas" id="Q94K18">
    <property type="expression patterns" value="baseline and differential"/>
</dbReference>
<dbReference type="GO" id="GO:0016020">
    <property type="term" value="C:membrane"/>
    <property type="evidence" value="ECO:0007669"/>
    <property type="project" value="UniProtKB-SubCell"/>
</dbReference>
<dbReference type="InterPro" id="IPR037759">
    <property type="entry name" value="At4g29660-like"/>
</dbReference>
<dbReference type="PANTHER" id="PTHR37898">
    <property type="entry name" value="OS05G0540200 PROTEIN"/>
    <property type="match status" value="1"/>
</dbReference>
<dbReference type="PANTHER" id="PTHR37898:SF1">
    <property type="entry name" value="OS05G0540200 PROTEIN"/>
    <property type="match status" value="1"/>
</dbReference>
<reference key="1">
    <citation type="journal article" date="1999" name="Nature">
        <title>Sequence and analysis of chromosome 4 of the plant Arabidopsis thaliana.</title>
        <authorList>
            <person name="Mayer K.F.X."/>
            <person name="Schueller C."/>
            <person name="Wambutt R."/>
            <person name="Murphy G."/>
            <person name="Volckaert G."/>
            <person name="Pohl T."/>
            <person name="Duesterhoeft A."/>
            <person name="Stiekema W."/>
            <person name="Entian K.-D."/>
            <person name="Terryn N."/>
            <person name="Harris B."/>
            <person name="Ansorge W."/>
            <person name="Brandt P."/>
            <person name="Grivell L.A."/>
            <person name="Rieger M."/>
            <person name="Weichselgartner M."/>
            <person name="de Simone V."/>
            <person name="Obermaier B."/>
            <person name="Mache R."/>
            <person name="Mueller M."/>
            <person name="Kreis M."/>
            <person name="Delseny M."/>
            <person name="Puigdomenech P."/>
            <person name="Watson M."/>
            <person name="Schmidtheini T."/>
            <person name="Reichert B."/>
            <person name="Portetelle D."/>
            <person name="Perez-Alonso M."/>
            <person name="Boutry M."/>
            <person name="Bancroft I."/>
            <person name="Vos P."/>
            <person name="Hoheisel J."/>
            <person name="Zimmermann W."/>
            <person name="Wedler H."/>
            <person name="Ridley P."/>
            <person name="Langham S.-A."/>
            <person name="McCullagh B."/>
            <person name="Bilham L."/>
            <person name="Robben J."/>
            <person name="van der Schueren J."/>
            <person name="Grymonprez B."/>
            <person name="Chuang Y.-J."/>
            <person name="Vandenbussche F."/>
            <person name="Braeken M."/>
            <person name="Weltjens I."/>
            <person name="Voet M."/>
            <person name="Bastiaens I."/>
            <person name="Aert R."/>
            <person name="Defoor E."/>
            <person name="Weitzenegger T."/>
            <person name="Bothe G."/>
            <person name="Ramsperger U."/>
            <person name="Hilbert H."/>
            <person name="Braun M."/>
            <person name="Holzer E."/>
            <person name="Brandt A."/>
            <person name="Peters S."/>
            <person name="van Staveren M."/>
            <person name="Dirkse W."/>
            <person name="Mooijman P."/>
            <person name="Klein Lankhorst R."/>
            <person name="Rose M."/>
            <person name="Hauf J."/>
            <person name="Koetter P."/>
            <person name="Berneiser S."/>
            <person name="Hempel S."/>
            <person name="Feldpausch M."/>
            <person name="Lamberth S."/>
            <person name="Van den Daele H."/>
            <person name="De Keyser A."/>
            <person name="Buysshaert C."/>
            <person name="Gielen J."/>
            <person name="Villarroel R."/>
            <person name="De Clercq R."/>
            <person name="van Montagu M."/>
            <person name="Rogers J."/>
            <person name="Cronin A."/>
            <person name="Quail M.A."/>
            <person name="Bray-Allen S."/>
            <person name="Clark L."/>
            <person name="Doggett J."/>
            <person name="Hall S."/>
            <person name="Kay M."/>
            <person name="Lennard N."/>
            <person name="McLay K."/>
            <person name="Mayes R."/>
            <person name="Pettett A."/>
            <person name="Rajandream M.A."/>
            <person name="Lyne M."/>
            <person name="Benes V."/>
            <person name="Rechmann S."/>
            <person name="Borkova D."/>
            <person name="Bloecker H."/>
            <person name="Scharfe M."/>
            <person name="Grimm M."/>
            <person name="Loehnert T.-H."/>
            <person name="Dose S."/>
            <person name="de Haan M."/>
            <person name="Maarse A.C."/>
            <person name="Schaefer M."/>
            <person name="Mueller-Auer S."/>
            <person name="Gabel C."/>
            <person name="Fuchs M."/>
            <person name="Fartmann B."/>
            <person name="Granderath K."/>
            <person name="Dauner D."/>
            <person name="Herzl A."/>
            <person name="Neumann S."/>
            <person name="Argiriou A."/>
            <person name="Vitale D."/>
            <person name="Liguori R."/>
            <person name="Piravandi E."/>
            <person name="Massenet O."/>
            <person name="Quigley F."/>
            <person name="Clabauld G."/>
            <person name="Muendlein A."/>
            <person name="Felber R."/>
            <person name="Schnabl S."/>
            <person name="Hiller R."/>
            <person name="Schmidt W."/>
            <person name="Lecharny A."/>
            <person name="Aubourg S."/>
            <person name="Chefdor F."/>
            <person name="Cooke R."/>
            <person name="Berger C."/>
            <person name="Monfort A."/>
            <person name="Casacuberta E."/>
            <person name="Gibbons T."/>
            <person name="Weber N."/>
            <person name="Vandenbol M."/>
            <person name="Bargues M."/>
            <person name="Terol J."/>
            <person name="Torres A."/>
            <person name="Perez-Perez A."/>
            <person name="Purnelle B."/>
            <person name="Bent E."/>
            <person name="Johnson S."/>
            <person name="Tacon D."/>
            <person name="Jesse T."/>
            <person name="Heijnen L."/>
            <person name="Schwarz S."/>
            <person name="Scholler P."/>
            <person name="Heber S."/>
            <person name="Francs P."/>
            <person name="Bielke C."/>
            <person name="Frishman D."/>
            <person name="Haase D."/>
            <person name="Lemcke K."/>
            <person name="Mewes H.-W."/>
            <person name="Stocker S."/>
            <person name="Zaccaria P."/>
            <person name="Bevan M."/>
            <person name="Wilson R.K."/>
            <person name="de la Bastide M."/>
            <person name="Habermann K."/>
            <person name="Parnell L."/>
            <person name="Dedhia N."/>
            <person name="Gnoj L."/>
            <person name="Schutz K."/>
            <person name="Huang E."/>
            <person name="Spiegel L."/>
            <person name="Sekhon M."/>
            <person name="Murray J."/>
            <person name="Sheet P."/>
            <person name="Cordes M."/>
            <person name="Abu-Threideh J."/>
            <person name="Stoneking T."/>
            <person name="Kalicki J."/>
            <person name="Graves T."/>
            <person name="Harmon G."/>
            <person name="Edwards J."/>
            <person name="Latreille P."/>
            <person name="Courtney L."/>
            <person name="Cloud J."/>
            <person name="Abbott A."/>
            <person name="Scott K."/>
            <person name="Johnson D."/>
            <person name="Minx P."/>
            <person name="Bentley D."/>
            <person name="Fulton B."/>
            <person name="Miller N."/>
            <person name="Greco T."/>
            <person name="Kemp K."/>
            <person name="Kramer J."/>
            <person name="Fulton L."/>
            <person name="Mardis E."/>
            <person name="Dante M."/>
            <person name="Pepin K."/>
            <person name="Hillier L.W."/>
            <person name="Nelson J."/>
            <person name="Spieth J."/>
            <person name="Ryan E."/>
            <person name="Andrews S."/>
            <person name="Geisel C."/>
            <person name="Layman D."/>
            <person name="Du H."/>
            <person name="Ali J."/>
            <person name="Berghoff A."/>
            <person name="Jones K."/>
            <person name="Drone K."/>
            <person name="Cotton M."/>
            <person name="Joshu C."/>
            <person name="Antonoiu B."/>
            <person name="Zidanic M."/>
            <person name="Strong C."/>
            <person name="Sun H."/>
            <person name="Lamar B."/>
            <person name="Yordan C."/>
            <person name="Ma P."/>
            <person name="Zhong J."/>
            <person name="Preston R."/>
            <person name="Vil D."/>
            <person name="Shekher M."/>
            <person name="Matero A."/>
            <person name="Shah R."/>
            <person name="Swaby I.K."/>
            <person name="O'Shaughnessy A."/>
            <person name="Rodriguez M."/>
            <person name="Hoffman J."/>
            <person name="Till S."/>
            <person name="Granat S."/>
            <person name="Shohdy N."/>
            <person name="Hasegawa A."/>
            <person name="Hameed A."/>
            <person name="Lodhi M."/>
            <person name="Johnson A."/>
            <person name="Chen E."/>
            <person name="Marra M.A."/>
            <person name="Martienssen R."/>
            <person name="McCombie W.R."/>
        </authorList>
    </citation>
    <scope>NUCLEOTIDE SEQUENCE [LARGE SCALE GENOMIC DNA]</scope>
    <source>
        <strain>cv. Columbia</strain>
    </source>
</reference>
<reference key="2">
    <citation type="journal article" date="2017" name="Plant J.">
        <title>Araport11: a complete reannotation of the Arabidopsis thaliana reference genome.</title>
        <authorList>
            <person name="Cheng C.Y."/>
            <person name="Krishnakumar V."/>
            <person name="Chan A.P."/>
            <person name="Thibaud-Nissen F."/>
            <person name="Schobel S."/>
            <person name="Town C.D."/>
        </authorList>
    </citation>
    <scope>GENOME REANNOTATION</scope>
    <source>
        <strain>cv. Columbia</strain>
    </source>
</reference>
<reference key="3">
    <citation type="journal article" date="2003" name="Science">
        <title>Empirical analysis of transcriptional activity in the Arabidopsis genome.</title>
        <authorList>
            <person name="Yamada K."/>
            <person name="Lim J."/>
            <person name="Dale J.M."/>
            <person name="Chen H."/>
            <person name="Shinn P."/>
            <person name="Palm C.J."/>
            <person name="Southwick A.M."/>
            <person name="Wu H.C."/>
            <person name="Kim C.J."/>
            <person name="Nguyen M."/>
            <person name="Pham P.K."/>
            <person name="Cheuk R.F."/>
            <person name="Karlin-Newmann G."/>
            <person name="Liu S.X."/>
            <person name="Lam B."/>
            <person name="Sakano H."/>
            <person name="Wu T."/>
            <person name="Yu G."/>
            <person name="Miranda M."/>
            <person name="Quach H.L."/>
            <person name="Tripp M."/>
            <person name="Chang C.H."/>
            <person name="Lee J.M."/>
            <person name="Toriumi M.J."/>
            <person name="Chan M.M."/>
            <person name="Tang C.C."/>
            <person name="Onodera C.S."/>
            <person name="Deng J.M."/>
            <person name="Akiyama K."/>
            <person name="Ansari Y."/>
            <person name="Arakawa T."/>
            <person name="Banh J."/>
            <person name="Banno F."/>
            <person name="Bowser L."/>
            <person name="Brooks S.Y."/>
            <person name="Carninci P."/>
            <person name="Chao Q."/>
            <person name="Choy N."/>
            <person name="Enju A."/>
            <person name="Goldsmith A.D."/>
            <person name="Gurjal M."/>
            <person name="Hansen N.F."/>
            <person name="Hayashizaki Y."/>
            <person name="Johnson-Hopson C."/>
            <person name="Hsuan V.W."/>
            <person name="Iida K."/>
            <person name="Karnes M."/>
            <person name="Khan S."/>
            <person name="Koesema E."/>
            <person name="Ishida J."/>
            <person name="Jiang P.X."/>
            <person name="Jones T."/>
            <person name="Kawai J."/>
            <person name="Kamiya A."/>
            <person name="Meyers C."/>
            <person name="Nakajima M."/>
            <person name="Narusaka M."/>
            <person name="Seki M."/>
            <person name="Sakurai T."/>
            <person name="Satou M."/>
            <person name="Tamse R."/>
            <person name="Vaysberg M."/>
            <person name="Wallender E.K."/>
            <person name="Wong C."/>
            <person name="Yamamura Y."/>
            <person name="Yuan S."/>
            <person name="Shinozaki K."/>
            <person name="Davis R.W."/>
            <person name="Theologis A."/>
            <person name="Ecker J.R."/>
        </authorList>
    </citation>
    <scope>NUCLEOTIDE SEQUENCE [LARGE SCALE MRNA]</scope>
    <source>
        <strain>cv. Columbia</strain>
    </source>
</reference>
<reference key="4">
    <citation type="submission" date="2002-03" db="EMBL/GenBank/DDBJ databases">
        <title>Full-length cDNA from Arabidopsis thaliana.</title>
        <authorList>
            <person name="Brover V.V."/>
            <person name="Troukhan M.E."/>
            <person name="Alexandrov N.A."/>
            <person name="Lu Y.-P."/>
            <person name="Flavell R.B."/>
            <person name="Feldmann K.A."/>
        </authorList>
    </citation>
    <scope>NUCLEOTIDE SEQUENCE [LARGE SCALE MRNA]</scope>
</reference>
<feature type="chain" id="PRO_0000352266" description="Uncharacterized protein At4g29660">
    <location>
        <begin position="1"/>
        <end position="103"/>
    </location>
</feature>
<feature type="transmembrane region" description="Helical" evidence="1">
    <location>
        <begin position="38"/>
        <end position="58"/>
    </location>
</feature>
<evidence type="ECO:0000255" key="1"/>
<evidence type="ECO:0000305" key="2"/>
<keyword id="KW-0472">Membrane</keyword>
<keyword id="KW-1185">Reference proteome</keyword>
<keyword id="KW-0812">Transmembrane</keyword>
<keyword id="KW-1133">Transmembrane helix</keyword>
<protein>
    <recommendedName>
        <fullName>Uncharacterized protein At4g29660</fullName>
    </recommendedName>
    <alternativeName>
        <fullName>Protein EMBRYO DEFECTIVE 2752</fullName>
    </alternativeName>
</protein>
<sequence length="103" mass="12272">MQGVWSQLWRKYADYKYNKFERFAVWEMIEPYRRPKTFTTLITIYVAAFYTGVIGAAVTEQLYKEKFWEEHPGKTVPLMKPVFYRGPWRVYRGEAIASDASSQ</sequence>
<name>Y4966_ARATH</name>
<accession>Q94K18</accession>
<accession>Q9SU85</accession>
<comment type="subcellular location">
    <subcellularLocation>
        <location evidence="2">Membrane</location>
        <topology evidence="2">Single-pass membrane protein</topology>
    </subcellularLocation>
</comment>
<comment type="sequence caution" evidence="2">
    <conflict type="erroneous gene model prediction">
        <sequence resource="EMBL-CDS" id="CAB45326"/>
    </conflict>
    <text>The predicted gene At4g29660 has been split into 2 genes: At4g29658 and At4g29660.</text>
</comment>
<comment type="sequence caution" evidence="2">
    <conflict type="erroneous gene model prediction">
        <sequence resource="EMBL-CDS" id="CAB79724"/>
    </conflict>
    <text>The predicted gene At4g29660 has been split into 2 genes: At4g29658 and At4g29660.</text>
</comment>